<reference key="1">
    <citation type="journal article" date="1996" name="Microbiology">
        <title>Systematic sequencing of the 283 kb 210 degrees-232 degrees region of the Bacillus subtilis genome containing the skin element and many sporulation genes.</title>
        <authorList>
            <person name="Mizuno M."/>
            <person name="Masuda S."/>
            <person name="Takemaru K."/>
            <person name="Hosono S."/>
            <person name="Sato T."/>
            <person name="Takeuchi M."/>
            <person name="Kobayashi Y."/>
        </authorList>
    </citation>
    <scope>NUCLEOTIDE SEQUENCE [GENOMIC DNA]</scope>
    <source>
        <strain>168 / JH642</strain>
    </source>
</reference>
<reference key="2">
    <citation type="journal article" date="1997" name="Nature">
        <title>The complete genome sequence of the Gram-positive bacterium Bacillus subtilis.</title>
        <authorList>
            <person name="Kunst F."/>
            <person name="Ogasawara N."/>
            <person name="Moszer I."/>
            <person name="Albertini A.M."/>
            <person name="Alloni G."/>
            <person name="Azevedo V."/>
            <person name="Bertero M.G."/>
            <person name="Bessieres P."/>
            <person name="Bolotin A."/>
            <person name="Borchert S."/>
            <person name="Borriss R."/>
            <person name="Boursier L."/>
            <person name="Brans A."/>
            <person name="Braun M."/>
            <person name="Brignell S.C."/>
            <person name="Bron S."/>
            <person name="Brouillet S."/>
            <person name="Bruschi C.V."/>
            <person name="Caldwell B."/>
            <person name="Capuano V."/>
            <person name="Carter N.M."/>
            <person name="Choi S.-K."/>
            <person name="Codani J.-J."/>
            <person name="Connerton I.F."/>
            <person name="Cummings N.J."/>
            <person name="Daniel R.A."/>
            <person name="Denizot F."/>
            <person name="Devine K.M."/>
            <person name="Duesterhoeft A."/>
            <person name="Ehrlich S.D."/>
            <person name="Emmerson P.T."/>
            <person name="Entian K.-D."/>
            <person name="Errington J."/>
            <person name="Fabret C."/>
            <person name="Ferrari E."/>
            <person name="Foulger D."/>
            <person name="Fritz C."/>
            <person name="Fujita M."/>
            <person name="Fujita Y."/>
            <person name="Fuma S."/>
            <person name="Galizzi A."/>
            <person name="Galleron N."/>
            <person name="Ghim S.-Y."/>
            <person name="Glaser P."/>
            <person name="Goffeau A."/>
            <person name="Golightly E.J."/>
            <person name="Grandi G."/>
            <person name="Guiseppi G."/>
            <person name="Guy B.J."/>
            <person name="Haga K."/>
            <person name="Haiech J."/>
            <person name="Harwood C.R."/>
            <person name="Henaut A."/>
            <person name="Hilbert H."/>
            <person name="Holsappel S."/>
            <person name="Hosono S."/>
            <person name="Hullo M.-F."/>
            <person name="Itaya M."/>
            <person name="Jones L.-M."/>
            <person name="Joris B."/>
            <person name="Karamata D."/>
            <person name="Kasahara Y."/>
            <person name="Klaerr-Blanchard M."/>
            <person name="Klein C."/>
            <person name="Kobayashi Y."/>
            <person name="Koetter P."/>
            <person name="Koningstein G."/>
            <person name="Krogh S."/>
            <person name="Kumano M."/>
            <person name="Kurita K."/>
            <person name="Lapidus A."/>
            <person name="Lardinois S."/>
            <person name="Lauber J."/>
            <person name="Lazarevic V."/>
            <person name="Lee S.-M."/>
            <person name="Levine A."/>
            <person name="Liu H."/>
            <person name="Masuda S."/>
            <person name="Mauel C."/>
            <person name="Medigue C."/>
            <person name="Medina N."/>
            <person name="Mellado R.P."/>
            <person name="Mizuno M."/>
            <person name="Moestl D."/>
            <person name="Nakai S."/>
            <person name="Noback M."/>
            <person name="Noone D."/>
            <person name="O'Reilly M."/>
            <person name="Ogawa K."/>
            <person name="Ogiwara A."/>
            <person name="Oudega B."/>
            <person name="Park S.-H."/>
            <person name="Parro V."/>
            <person name="Pohl T.M."/>
            <person name="Portetelle D."/>
            <person name="Porwollik S."/>
            <person name="Prescott A.M."/>
            <person name="Presecan E."/>
            <person name="Pujic P."/>
            <person name="Purnelle B."/>
            <person name="Rapoport G."/>
            <person name="Rey M."/>
            <person name="Reynolds S."/>
            <person name="Rieger M."/>
            <person name="Rivolta C."/>
            <person name="Rocha E."/>
            <person name="Roche B."/>
            <person name="Rose M."/>
            <person name="Sadaie Y."/>
            <person name="Sato T."/>
            <person name="Scanlan E."/>
            <person name="Schleich S."/>
            <person name="Schroeter R."/>
            <person name="Scoffone F."/>
            <person name="Sekiguchi J."/>
            <person name="Sekowska A."/>
            <person name="Seror S.J."/>
            <person name="Serror P."/>
            <person name="Shin B.-S."/>
            <person name="Soldo B."/>
            <person name="Sorokin A."/>
            <person name="Tacconi E."/>
            <person name="Takagi T."/>
            <person name="Takahashi H."/>
            <person name="Takemaru K."/>
            <person name="Takeuchi M."/>
            <person name="Tamakoshi A."/>
            <person name="Tanaka T."/>
            <person name="Terpstra P."/>
            <person name="Tognoni A."/>
            <person name="Tosato V."/>
            <person name="Uchiyama S."/>
            <person name="Vandenbol M."/>
            <person name="Vannier F."/>
            <person name="Vassarotti A."/>
            <person name="Viari A."/>
            <person name="Wambutt R."/>
            <person name="Wedler E."/>
            <person name="Wedler H."/>
            <person name="Weitzenegger T."/>
            <person name="Winters P."/>
            <person name="Wipat A."/>
            <person name="Yamamoto H."/>
            <person name="Yamane K."/>
            <person name="Yasumoto K."/>
            <person name="Yata K."/>
            <person name="Yoshida K."/>
            <person name="Yoshikawa H.-F."/>
            <person name="Zumstein E."/>
            <person name="Yoshikawa H."/>
            <person name="Danchin A."/>
        </authorList>
    </citation>
    <scope>NUCLEOTIDE SEQUENCE [LARGE SCALE GENOMIC DNA]</scope>
    <source>
        <strain>168</strain>
    </source>
</reference>
<reference key="3">
    <citation type="journal article" date="2009" name="Microbiology">
        <title>From a consortium sequence to a unified sequence: the Bacillus subtilis 168 reference genome a decade later.</title>
        <authorList>
            <person name="Barbe V."/>
            <person name="Cruveiller S."/>
            <person name="Kunst F."/>
            <person name="Lenoble P."/>
            <person name="Meurice G."/>
            <person name="Sekowska A."/>
            <person name="Vallenet D."/>
            <person name="Wang T."/>
            <person name="Moszer I."/>
            <person name="Medigue C."/>
            <person name="Danchin A."/>
        </authorList>
    </citation>
    <scope>SEQUENCE REVISION TO 192; 370; 379 AND 499</scope>
</reference>
<reference key="4">
    <citation type="journal article" date="2004" name="BMC Microbiol.">
        <title>Expression of a novel gene, gluP, is essential for normal Bacillus subtilis cell division and contributes to glucose export.</title>
        <authorList>
            <person name="Mesak L.R."/>
            <person name="Mesak F.M."/>
            <person name="Dahl M.K."/>
        </authorList>
    </citation>
    <scope>FUNCTION</scope>
    <source>
        <strain>168</strain>
    </source>
</reference>
<reference key="5">
    <citation type="journal article" date="2005" name="EMBO J.">
        <title>Mechanism of intramembrane proteolysis investigated with purified rhomboid proteases.</title>
        <authorList>
            <person name="Lemberg M.K."/>
            <person name="Menendez J."/>
            <person name="Misik A."/>
            <person name="Garcia M."/>
            <person name="Koth C.M."/>
            <person name="Freeman M."/>
        </authorList>
    </citation>
    <scope>FUNCTION</scope>
    <scope>SUBCELLULAR LOCATION</scope>
    <scope>REACTION MECHANISM</scope>
    <scope>MUTAGENESIS OF ARG-224; HIS-237; ASN-241; GLY-286; SER-288 AND HIS-339</scope>
</reference>
<reference key="6">
    <citation type="journal article" date="2005" name="Proc. Natl. Acad. Sci. U.S.A.">
        <title>Reconstitution of intramembrane proteolysis in vitro reveals that pure rhomboid is sufficient for catalysis and specificity.</title>
        <authorList>
            <person name="Urban S."/>
            <person name="Wolfe M.S."/>
        </authorList>
    </citation>
    <scope>FUNCTION</scope>
    <scope>ACTIVITY REGULATION</scope>
    <scope>TEMPERATURE DEPENDENCE</scope>
</reference>
<reference key="7">
    <citation type="journal article" date="2006" name="J. Bacteriol.">
        <title>Functional characterization of Escherichia coli GlpG and additional rhomboid proteins using an aarA mutant of Providencia stuartii.</title>
        <authorList>
            <person name="Clemmer K.M."/>
            <person name="Sturgill G.M."/>
            <person name="Veenstra A."/>
            <person name="Rather P.N."/>
        </authorList>
    </citation>
    <scope>FUNCTION</scope>
</reference>
<dbReference type="EC" id="3.4.21.105"/>
<dbReference type="EMBL" id="D84432">
    <property type="protein sequence ID" value="BAA12519.1"/>
    <property type="molecule type" value="Genomic_DNA"/>
</dbReference>
<dbReference type="EMBL" id="AL009126">
    <property type="protein sequence ID" value="CAB14418.2"/>
    <property type="molecule type" value="Genomic_DNA"/>
</dbReference>
<dbReference type="PIR" id="B69957">
    <property type="entry name" value="B69957"/>
</dbReference>
<dbReference type="RefSeq" id="WP_003230128.1">
    <property type="nucleotide sequence ID" value="NZ_OZ025638.1"/>
</dbReference>
<dbReference type="PDB" id="6R0J">
    <property type="method" value="NMR"/>
    <property type="chains" value="A=1-176"/>
</dbReference>
<dbReference type="PDBsum" id="6R0J"/>
<dbReference type="BMRB" id="P54493"/>
<dbReference type="SMR" id="P54493"/>
<dbReference type="FunCoup" id="P54493">
    <property type="interactions" value="26"/>
</dbReference>
<dbReference type="STRING" id="224308.BSU24870"/>
<dbReference type="BindingDB" id="P54493"/>
<dbReference type="ChEMBL" id="CHEMBL4295579"/>
<dbReference type="MEROPS" id="S54.014"/>
<dbReference type="PaxDb" id="224308-BSU24870"/>
<dbReference type="EnsemblBacteria" id="CAB14418">
    <property type="protein sequence ID" value="CAB14418"/>
    <property type="gene ID" value="BSU_24870"/>
</dbReference>
<dbReference type="GeneID" id="938211"/>
<dbReference type="KEGG" id="bsu:BSU24870"/>
<dbReference type="PATRIC" id="fig|224308.179.peg.2706"/>
<dbReference type="eggNOG" id="COG0457">
    <property type="taxonomic scope" value="Bacteria"/>
</dbReference>
<dbReference type="eggNOG" id="COG0705">
    <property type="taxonomic scope" value="Bacteria"/>
</dbReference>
<dbReference type="InParanoid" id="P54493"/>
<dbReference type="OrthoDB" id="9813074at2"/>
<dbReference type="PhylomeDB" id="P54493"/>
<dbReference type="BioCyc" id="BSUB:BSU24870-MONOMER"/>
<dbReference type="BRENDA" id="3.4.21.105">
    <property type="organism ID" value="658"/>
</dbReference>
<dbReference type="Proteomes" id="UP000001570">
    <property type="component" value="Chromosome"/>
</dbReference>
<dbReference type="GO" id="GO:0005886">
    <property type="term" value="C:plasma membrane"/>
    <property type="evidence" value="ECO:0007669"/>
    <property type="project" value="UniProtKB-SubCell"/>
</dbReference>
<dbReference type="GO" id="GO:0004252">
    <property type="term" value="F:serine-type endopeptidase activity"/>
    <property type="evidence" value="ECO:0000318"/>
    <property type="project" value="GO_Central"/>
</dbReference>
<dbReference type="GO" id="GO:0006508">
    <property type="term" value="P:proteolysis"/>
    <property type="evidence" value="ECO:0007669"/>
    <property type="project" value="UniProtKB-KW"/>
</dbReference>
<dbReference type="Gene3D" id="1.20.1540.10">
    <property type="entry name" value="Rhomboid-like"/>
    <property type="match status" value="1"/>
</dbReference>
<dbReference type="Gene3D" id="1.25.40.10">
    <property type="entry name" value="Tetratricopeptide repeat domain"/>
    <property type="match status" value="1"/>
</dbReference>
<dbReference type="InterPro" id="IPR022764">
    <property type="entry name" value="Peptidase_S54_rhomboid_dom"/>
</dbReference>
<dbReference type="InterPro" id="IPR035952">
    <property type="entry name" value="Rhomboid-like_sf"/>
</dbReference>
<dbReference type="InterPro" id="IPR050925">
    <property type="entry name" value="Rhomboid_protease_S54"/>
</dbReference>
<dbReference type="InterPro" id="IPR011990">
    <property type="entry name" value="TPR-like_helical_dom_sf"/>
</dbReference>
<dbReference type="InterPro" id="IPR019734">
    <property type="entry name" value="TPR_rpt"/>
</dbReference>
<dbReference type="PANTHER" id="PTHR43731:SF14">
    <property type="entry name" value="PRESENILIN-ASSOCIATED RHOMBOID-LIKE PROTEIN, MITOCHONDRIAL"/>
    <property type="match status" value="1"/>
</dbReference>
<dbReference type="PANTHER" id="PTHR43731">
    <property type="entry name" value="RHOMBOID PROTEASE"/>
    <property type="match status" value="1"/>
</dbReference>
<dbReference type="Pfam" id="PF01694">
    <property type="entry name" value="Rhomboid"/>
    <property type="match status" value="1"/>
</dbReference>
<dbReference type="Pfam" id="PF14559">
    <property type="entry name" value="TPR_19"/>
    <property type="match status" value="1"/>
</dbReference>
<dbReference type="SMART" id="SM00028">
    <property type="entry name" value="TPR"/>
    <property type="match status" value="2"/>
</dbReference>
<dbReference type="SUPFAM" id="SSF144091">
    <property type="entry name" value="Rhomboid-like"/>
    <property type="match status" value="1"/>
</dbReference>
<dbReference type="SUPFAM" id="SSF48452">
    <property type="entry name" value="TPR-like"/>
    <property type="match status" value="1"/>
</dbReference>
<dbReference type="PROSITE" id="PS50005">
    <property type="entry name" value="TPR"/>
    <property type="match status" value="2"/>
</dbReference>
<dbReference type="PROSITE" id="PS50293">
    <property type="entry name" value="TPR_REGION"/>
    <property type="match status" value="1"/>
</dbReference>
<gene>
    <name type="primary">gluP</name>
    <name type="synonym">yqgP</name>
    <name type="ordered locus">BSU24870</name>
</gene>
<evidence type="ECO:0000255" key="1"/>
<evidence type="ECO:0000269" key="2">
    <source>
    </source>
</evidence>
<evidence type="ECO:0000269" key="3">
    <source>
    </source>
</evidence>
<evidence type="ECO:0000269" key="4">
    <source>
    </source>
</evidence>
<evidence type="ECO:0000269" key="5">
    <source>
    </source>
</evidence>
<evidence type="ECO:0000305" key="6"/>
<evidence type="ECO:0007829" key="7">
    <source>
        <dbReference type="PDB" id="6R0J"/>
    </source>
</evidence>
<name>GLUP_BACSU</name>
<organism>
    <name type="scientific">Bacillus subtilis (strain 168)</name>
    <dbReference type="NCBI Taxonomy" id="224308"/>
    <lineage>
        <taxon>Bacteria</taxon>
        <taxon>Bacillati</taxon>
        <taxon>Bacillota</taxon>
        <taxon>Bacilli</taxon>
        <taxon>Bacillales</taxon>
        <taxon>Bacillaceae</taxon>
        <taxon>Bacillus</taxon>
    </lineage>
</organism>
<comment type="function">
    <text evidence="2 3 4 5">Rhomboid-type serine protease that catalyzes intramembrane proteolysis. Important for normal cell division and sporulation. May act as a glucose exporter.</text>
</comment>
<comment type="catalytic activity">
    <reaction>
        <text>Cleaves type-1 transmembrane domains using a catalytic dyad composed of serine and histidine that are contributed by different transmembrane domains.</text>
        <dbReference type="EC" id="3.4.21.105"/>
    </reaction>
</comment>
<comment type="activity regulation">
    <text evidence="4">Inhibited by dichloroisocoumarin (DCI) and N-p-tosyl-L-phenylalanine chloromethyl ketone (TPCK), but not by other serine protease inhibitors such as sulfonyl fluoride PMSF and 4-(2-aminoethyl)benzenesulfonyl fluoride (AEBSF).</text>
</comment>
<comment type="biophysicochemical properties">
    <temperatureDependence>
        <text evidence="4">Is more active at more active at 25 degrees Celsius than at 37 degrees Celsius.</text>
    </temperatureDependence>
</comment>
<comment type="subcellular location">
    <subcellularLocation>
        <location evidence="3">Cell membrane</location>
        <topology evidence="3">Multi-pass membrane protein</topology>
    </subcellularLocation>
</comment>
<comment type="similarity">
    <text evidence="6">Belongs to the peptidase S54 family.</text>
</comment>
<keyword id="KW-0002">3D-structure</keyword>
<keyword id="KW-1003">Cell membrane</keyword>
<keyword id="KW-0378">Hydrolase</keyword>
<keyword id="KW-0472">Membrane</keyword>
<keyword id="KW-0645">Protease</keyword>
<keyword id="KW-1185">Reference proteome</keyword>
<keyword id="KW-0677">Repeat</keyword>
<keyword id="KW-0720">Serine protease</keyword>
<keyword id="KW-0802">TPR repeat</keyword>
<keyword id="KW-0812">Transmembrane</keyword>
<keyword id="KW-1133">Transmembrane helix</keyword>
<sequence>MFLLEYTYWKIAAHLVNSGYGVIQAGESDEIWLEAPDKSSHDLVRLYKHDLDFRQEMVRDIEEQAERVERVRHQLGRRRMKLLNVFFSTEAPVDDWEEIAKKTFEKGTVSVEPAIVRGTMLRDDLQAVFPSFRTEDCSEEHASFENAQMARERFLSLVLKQEEQRKTEAAVFQNGKPTFTYLFIALQILMFFLLEINGGSTNTETLVAFGAKENSLIAQGEWWRLLTPIVLHIGIAHLAFNTLALWSVGTAVERMYGSGRFLLIYLAAGITGSIASFVFSPYPSAGASGAIFGCLGALLYVALSNRKMFLRTIGTNIIVIIIINLGFGFAVSNIDNSGHIGGLIGGFFAAAALGLPKAGAFGKRLLSAVLLIALAVGFLYYGLHSPSHQESALIQQASELYQEGKYEEVTELLNGEAAQKDASADLLKILAVSDIQIGEYDQAVSLLERAVKKEPKDHASYYNLALLYAEKNELAQAEKAIQTAVKLKPKEQRYKELQRQIENNKES</sequence>
<feature type="chain" id="PRO_0000049812" description="Rhomboid protease GluP">
    <location>
        <begin position="1"/>
        <end position="507"/>
    </location>
</feature>
<feature type="transmembrane region" description="Helical" evidence="1">
    <location>
        <begin position="179"/>
        <end position="199"/>
    </location>
</feature>
<feature type="transmembrane region" description="Helical" evidence="1">
    <location>
        <begin position="229"/>
        <end position="249"/>
    </location>
</feature>
<feature type="transmembrane region" description="Helical" evidence="1">
    <location>
        <begin position="261"/>
        <end position="281"/>
    </location>
</feature>
<feature type="transmembrane region" description="Helical" evidence="1">
    <location>
        <begin position="283"/>
        <end position="303"/>
    </location>
</feature>
<feature type="transmembrane region" description="Helical" evidence="1">
    <location>
        <begin position="312"/>
        <end position="332"/>
    </location>
</feature>
<feature type="transmembrane region" description="Helical" evidence="1">
    <location>
        <begin position="340"/>
        <end position="360"/>
    </location>
</feature>
<feature type="transmembrane region" description="Helical" evidence="1">
    <location>
        <begin position="365"/>
        <end position="385"/>
    </location>
</feature>
<feature type="repeat" description="TPR 1">
    <location>
        <begin position="424"/>
        <end position="457"/>
    </location>
</feature>
<feature type="repeat" description="TPR 2">
    <location>
        <begin position="458"/>
        <end position="491"/>
    </location>
</feature>
<feature type="active site" description="Nucleophile" evidence="6">
    <location>
        <position position="288"/>
    </location>
</feature>
<feature type="active site" description="Charge relay system" evidence="6">
    <location>
        <position position="339"/>
    </location>
</feature>
<feature type="mutagenesis site" description="Reduced protease activity." evidence="3">
    <original>R</original>
    <variation>A</variation>
    <location>
        <position position="224"/>
    </location>
</feature>
<feature type="mutagenesis site" description="Reduced protease activity." evidence="3">
    <original>H</original>
    <variation>A</variation>
    <location>
        <position position="237"/>
    </location>
</feature>
<feature type="mutagenesis site" description="No effect on protease activity in vitro." evidence="3">
    <original>N</original>
    <variation>A</variation>
    <location>
        <position position="241"/>
    </location>
</feature>
<feature type="mutagenesis site" description="Loss of protease activity." evidence="3">
    <original>G</original>
    <variation>A</variation>
    <location>
        <position position="286"/>
    </location>
</feature>
<feature type="mutagenesis site" description="Loss of protease activity." evidence="3">
    <original>S</original>
    <variation>A</variation>
    <location>
        <position position="288"/>
    </location>
</feature>
<feature type="mutagenesis site" description="Loss of protease activity." evidence="3">
    <original>H</original>
    <variation>A</variation>
    <location>
        <position position="339"/>
    </location>
</feature>
<feature type="sequence conflict" description="In Ref. 1; BAA12519." evidence="6" ref="1">
    <original>F</original>
    <variation>S</variation>
    <location>
        <position position="192"/>
    </location>
</feature>
<feature type="sequence conflict" description="In Ref. 1; BAA12519." evidence="6" ref="1">
    <original>L</original>
    <variation>F</variation>
    <location>
        <position position="370"/>
    </location>
</feature>
<feature type="sequence conflict" description="In Ref. 1; BAA12519." evidence="6" ref="1">
    <original>L</original>
    <variation>S</variation>
    <location>
        <position position="379"/>
    </location>
</feature>
<feature type="sequence conflict" description="In Ref. 1; BAA12519." evidence="6" ref="1">
    <original>R</original>
    <variation>W</variation>
    <location>
        <position position="499"/>
    </location>
</feature>
<feature type="helix" evidence="7">
    <location>
        <begin position="3"/>
        <end position="16"/>
    </location>
</feature>
<feature type="turn" evidence="7">
    <location>
        <begin position="17"/>
        <end position="19"/>
    </location>
</feature>
<feature type="strand" evidence="7">
    <location>
        <begin position="21"/>
        <end position="24"/>
    </location>
</feature>
<feature type="strand" evidence="7">
    <location>
        <begin position="28"/>
        <end position="34"/>
    </location>
</feature>
<feature type="strand" evidence="7">
    <location>
        <begin position="43"/>
        <end position="48"/>
    </location>
</feature>
<feature type="helix" evidence="7">
    <location>
        <begin position="54"/>
        <end position="75"/>
    </location>
</feature>
<feature type="strand" evidence="7">
    <location>
        <begin position="78"/>
        <end position="90"/>
    </location>
</feature>
<feature type="strand" evidence="7">
    <location>
        <begin position="93"/>
        <end position="95"/>
    </location>
</feature>
<feature type="helix" evidence="7">
    <location>
        <begin position="96"/>
        <end position="100"/>
    </location>
</feature>
<feature type="strand" evidence="7">
    <location>
        <begin position="104"/>
        <end position="106"/>
    </location>
</feature>
<feature type="strand" evidence="7">
    <location>
        <begin position="109"/>
        <end position="117"/>
    </location>
</feature>
<feature type="helix" evidence="7">
    <location>
        <begin position="118"/>
        <end position="120"/>
    </location>
</feature>
<feature type="helix" evidence="7">
    <location>
        <begin position="121"/>
        <end position="128"/>
    </location>
</feature>
<feature type="helix" evidence="7">
    <location>
        <begin position="134"/>
        <end position="137"/>
    </location>
</feature>
<feature type="turn" evidence="7">
    <location>
        <begin position="139"/>
        <end position="141"/>
    </location>
</feature>
<feature type="helix" evidence="7">
    <location>
        <begin position="146"/>
        <end position="168"/>
    </location>
</feature>
<proteinExistence type="evidence at protein level"/>
<protein>
    <recommendedName>
        <fullName>Rhomboid protease GluP</fullName>
        <ecNumber>3.4.21.105</ecNumber>
    </recommendedName>
    <alternativeName>
        <fullName>Intramembrane serine protease</fullName>
    </alternativeName>
</protein>
<accession>P54493</accession>